<feature type="chain" id="PRO_0000215998" description="Chalcone synthase B">
    <location>
        <begin position="1"/>
        <end position="366" status="greater than"/>
    </location>
</feature>
<feature type="active site" evidence="1">
    <location>
        <position position="172"/>
    </location>
</feature>
<feature type="non-terminal residue">
    <location>
        <position position="366"/>
    </location>
</feature>
<accession>P48402</accession>
<protein>
    <recommendedName>
        <fullName>Chalcone synthase B</fullName>
        <ecNumber>2.3.1.74</ecNumber>
    </recommendedName>
    <alternativeName>
        <fullName>Naringenin-chalcone synthase B</fullName>
        <shortName>CHS-B</shortName>
    </alternativeName>
</protein>
<reference key="1">
    <citation type="journal article" date="1995" name="Proc. Natl. Acad. Sci. U.S.A.">
        <title>Evolution of the chalcone synthase gene family in the genus Ipomoea.</title>
        <authorList>
            <person name="Durbin M.L."/>
            <person name="Learn G.H."/>
            <person name="Huttley G.A."/>
            <person name="Clegg M.T."/>
        </authorList>
    </citation>
    <scope>NUCLEOTIDE SEQUENCE [GENOMIC DNA]</scope>
</reference>
<gene>
    <name type="primary">CHSB</name>
</gene>
<dbReference type="EC" id="2.3.1.74"/>
<dbReference type="EMBL" id="U15951">
    <property type="protein sequence ID" value="AAC49033.1"/>
    <property type="molecule type" value="Genomic_DNA"/>
</dbReference>
<dbReference type="SMR" id="P48402"/>
<dbReference type="UniPathway" id="UPA00154"/>
<dbReference type="GO" id="GO:0016210">
    <property type="term" value="F:naringenin-chalcone synthase activity"/>
    <property type="evidence" value="ECO:0007669"/>
    <property type="project" value="UniProtKB-EC"/>
</dbReference>
<dbReference type="GO" id="GO:0009813">
    <property type="term" value="P:flavonoid biosynthetic process"/>
    <property type="evidence" value="ECO:0007669"/>
    <property type="project" value="UniProtKB-UniPathway"/>
</dbReference>
<dbReference type="GO" id="GO:0030639">
    <property type="term" value="P:polyketide biosynthetic process"/>
    <property type="evidence" value="ECO:0007669"/>
    <property type="project" value="TreeGrafter"/>
</dbReference>
<dbReference type="CDD" id="cd00831">
    <property type="entry name" value="CHS_like"/>
    <property type="match status" value="1"/>
</dbReference>
<dbReference type="FunFam" id="3.40.47.10:FF:000014">
    <property type="entry name" value="Chalcone synthase 1"/>
    <property type="match status" value="1"/>
</dbReference>
<dbReference type="FunFam" id="3.40.47.10:FF:000025">
    <property type="entry name" value="Chalcone synthase 2"/>
    <property type="match status" value="1"/>
</dbReference>
<dbReference type="Gene3D" id="3.40.47.10">
    <property type="match status" value="2"/>
</dbReference>
<dbReference type="InterPro" id="IPR012328">
    <property type="entry name" value="Chalcone/stilbene_synt_C"/>
</dbReference>
<dbReference type="InterPro" id="IPR001099">
    <property type="entry name" value="Chalcone/stilbene_synt_N"/>
</dbReference>
<dbReference type="InterPro" id="IPR018088">
    <property type="entry name" value="Chalcone/stilbene_synthase_AS"/>
</dbReference>
<dbReference type="InterPro" id="IPR011141">
    <property type="entry name" value="Polyketide_synthase_type-III"/>
</dbReference>
<dbReference type="InterPro" id="IPR016039">
    <property type="entry name" value="Thiolase-like"/>
</dbReference>
<dbReference type="PANTHER" id="PTHR11877:SF104">
    <property type="entry name" value="CHALCONE SYNTHASE"/>
    <property type="match status" value="1"/>
</dbReference>
<dbReference type="PANTHER" id="PTHR11877">
    <property type="entry name" value="HYDROXYMETHYLGLUTARYL-COA SYNTHASE"/>
    <property type="match status" value="1"/>
</dbReference>
<dbReference type="Pfam" id="PF02797">
    <property type="entry name" value="Chal_sti_synt_C"/>
    <property type="match status" value="1"/>
</dbReference>
<dbReference type="Pfam" id="PF00195">
    <property type="entry name" value="Chal_sti_synt_N"/>
    <property type="match status" value="1"/>
</dbReference>
<dbReference type="PIRSF" id="PIRSF000451">
    <property type="entry name" value="PKS_III"/>
    <property type="match status" value="1"/>
</dbReference>
<dbReference type="SUPFAM" id="SSF53901">
    <property type="entry name" value="Thiolase-like"/>
    <property type="match status" value="2"/>
</dbReference>
<dbReference type="PROSITE" id="PS00441">
    <property type="entry name" value="CHALCONE_SYNTH"/>
    <property type="match status" value="1"/>
</dbReference>
<keyword id="KW-0012">Acyltransferase</keyword>
<keyword id="KW-0284">Flavonoid biosynthesis</keyword>
<keyword id="KW-0808">Transferase</keyword>
<evidence type="ECO:0000255" key="1">
    <source>
        <dbReference type="PROSITE-ProRule" id="PRU10023"/>
    </source>
</evidence>
<evidence type="ECO:0000305" key="2"/>
<proteinExistence type="inferred from homology"/>
<organism>
    <name type="scientific">Ipomoea trifida</name>
    <name type="common">Morning glory</name>
    <dbReference type="NCBI Taxonomy" id="35884"/>
    <lineage>
        <taxon>Eukaryota</taxon>
        <taxon>Viridiplantae</taxon>
        <taxon>Streptophyta</taxon>
        <taxon>Embryophyta</taxon>
        <taxon>Tracheophyta</taxon>
        <taxon>Spermatophyta</taxon>
        <taxon>Magnoliopsida</taxon>
        <taxon>eudicotyledons</taxon>
        <taxon>Gunneridae</taxon>
        <taxon>Pentapetalae</taxon>
        <taxon>asterids</taxon>
        <taxon>lamiids</taxon>
        <taxon>Solanales</taxon>
        <taxon>Convolvulaceae</taxon>
        <taxon>Ipomoeeae</taxon>
        <taxon>Ipomoea</taxon>
    </lineage>
</organism>
<sequence>MSTAVTMLTDTWSRRAKRFEIEGYAKILAIGTATPANWVDQTTYPDFYFRITNSQHLLEHKEKFRRICNKSNIRKRHMVLTEELLKKNPNLCTYNDASLNTRQDILVSEVPKLGKEAAMKAIKVWGRPISEITHLVFCTTSGVDMPGADFQLTKLLGLNSSVKRLMMYQQGCNAGAAMLRLAKDLAENNKGARVLVVCSEVMLSVFRGPSLQQEDNLLAQCLFGDGSAAIIIGTDPRPGLETPLFELISAAQTIIPDTDSHLKLHVREMGLTFHCSKAVPTFITQNVEDCLVKAFEPYGISDWNSIFWVLHPGGNAIVEGVEETLGLAPEKLRASRDVLSEYGNLTSACVLFILDEVRKKSKKDEQ</sequence>
<comment type="function">
    <text>The primary product of this enzyme is 4,2',4',6'-tetrahydroxychalcone (also termed naringenin-chalcone or chalcone) which can under specific conditions spontaneously isomerize into naringenin.</text>
</comment>
<comment type="catalytic activity">
    <reaction evidence="1">
        <text>(E)-4-coumaroyl-CoA + 3 malonyl-CoA + 3 H(+) = 2',4,4',6'-tetrahydroxychalcone + 3 CO2 + 4 CoA</text>
        <dbReference type="Rhea" id="RHEA:11128"/>
        <dbReference type="ChEBI" id="CHEBI:15378"/>
        <dbReference type="ChEBI" id="CHEBI:15413"/>
        <dbReference type="ChEBI" id="CHEBI:16526"/>
        <dbReference type="ChEBI" id="CHEBI:57287"/>
        <dbReference type="ChEBI" id="CHEBI:57384"/>
        <dbReference type="ChEBI" id="CHEBI:85008"/>
        <dbReference type="EC" id="2.3.1.74"/>
    </reaction>
</comment>
<comment type="pathway">
    <text>Secondary metabolite biosynthesis; flavonoid biosynthesis.</text>
</comment>
<comment type="similarity">
    <text evidence="2">Belongs to the thiolase-like superfamily. Chalcone/stilbene synthases family.</text>
</comment>
<name>CHSB_IPOTF</name>